<sequence length="233" mass="25037">MTRIDSVRAATGSAKDSVLHAAEVVAPYADTAKERAAHYAHEARVRLAPKVTLAAEQARVQYGAHLAPRLEQARTHVPPKVELAAQEAALRTRKAARQAADYSRPMIEQAVAAAGPVRDEAATRAAAALVALRGQVTAEDIQKLVRKHERRARTGRAVRMLAVLGLVAGGAFAAWKWWDKQANPDWLVEPPEATEVPESGRLTSVDGSAEAVLDPEVQAKEAAEEAAKRDDQA</sequence>
<dbReference type="EMBL" id="U75434">
    <property type="protein sequence ID" value="AAB17874.1"/>
    <property type="molecule type" value="Genomic_DNA"/>
</dbReference>
<dbReference type="PIR" id="JQ0685">
    <property type="entry name" value="JQ0685"/>
</dbReference>
<dbReference type="OrthoDB" id="4336216at2"/>
<dbReference type="GO" id="GO:0003677">
    <property type="term" value="F:DNA binding"/>
    <property type="evidence" value="ECO:0007669"/>
    <property type="project" value="UniProtKB-KW"/>
</dbReference>
<dbReference type="GO" id="GO:0046677">
    <property type="term" value="P:response to antibiotic"/>
    <property type="evidence" value="ECO:0007669"/>
    <property type="project" value="UniProtKB-KW"/>
</dbReference>
<dbReference type="InterPro" id="IPR035214">
    <property type="entry name" value="DUF5324"/>
</dbReference>
<dbReference type="Pfam" id="PF17258">
    <property type="entry name" value="DUF5324"/>
    <property type="match status" value="1"/>
</dbReference>
<feature type="chain" id="PRO_0000096809" description="Putative nosiheptide resistance regulatory protein">
    <location>
        <begin position="1"/>
        <end position="233"/>
    </location>
</feature>
<feature type="DNA-binding region" description="H-T-H motif" evidence="1">
    <location>
        <begin position="93"/>
        <end position="112"/>
    </location>
</feature>
<feature type="region of interest" description="Disordered" evidence="2">
    <location>
        <begin position="190"/>
        <end position="233"/>
    </location>
</feature>
<feature type="compositionally biased region" description="Basic and acidic residues" evidence="2">
    <location>
        <begin position="217"/>
        <end position="233"/>
    </location>
</feature>
<name>NHSR_STRAS</name>
<organism>
    <name type="scientific">Streptomyces actuosus</name>
    <dbReference type="NCBI Taxonomy" id="1885"/>
    <lineage>
        <taxon>Bacteria</taxon>
        <taxon>Bacillati</taxon>
        <taxon>Actinomycetota</taxon>
        <taxon>Actinomycetes</taxon>
        <taxon>Kitasatosporales</taxon>
        <taxon>Streptomycetaceae</taxon>
        <taxon>Streptomyces</taxon>
    </lineage>
</organism>
<accession>P52392</accession>
<evidence type="ECO:0000255" key="1"/>
<evidence type="ECO:0000256" key="2">
    <source>
        <dbReference type="SAM" id="MobiDB-lite"/>
    </source>
</evidence>
<proteinExistence type="predicted"/>
<reference key="1">
    <citation type="journal article" date="1990" name="Gene">
        <title>Nucleotide sequence and transcriptional analysis of the nosiheptide-resistance gene from Streptomyces actuosus.</title>
        <authorList>
            <person name="Li Y."/>
            <person name="Dosch D.C."/>
            <person name="Strohl W.R."/>
            <person name="Floss H.G."/>
        </authorList>
    </citation>
    <scope>NUCLEOTIDE SEQUENCE [GENOMIC DNA]</scope>
    <source>
        <strain>ATCC 25421 / DSM 40337 / JCM 4445 / NBRC 13009 / NRRL 2954 / VKM Ac-1274</strain>
    </source>
</reference>
<keyword id="KW-0046">Antibiotic resistance</keyword>
<keyword id="KW-0238">DNA-binding</keyword>
<keyword id="KW-0804">Transcription</keyword>
<keyword id="KW-0805">Transcription regulation</keyword>
<protein>
    <recommendedName>
        <fullName>Putative nosiheptide resistance regulatory protein</fullName>
    </recommendedName>
    <alternativeName>
        <fullName>ORF699</fullName>
    </alternativeName>
</protein>
<comment type="function">
    <text>Seems to be involved in the regulation of nhs expression.</text>
</comment>